<name>TDCD_EDWPI</name>
<organism>
    <name type="scientific">Edwardsiella piscicida</name>
    <dbReference type="NCBI Taxonomy" id="1263550"/>
    <lineage>
        <taxon>Bacteria</taxon>
        <taxon>Pseudomonadati</taxon>
        <taxon>Pseudomonadota</taxon>
        <taxon>Gammaproteobacteria</taxon>
        <taxon>Enterobacterales</taxon>
        <taxon>Hafniaceae</taxon>
        <taxon>Edwardsiella</taxon>
    </lineage>
</organism>
<proteinExistence type="inferred from homology"/>
<keyword id="KW-0067">ATP-binding</keyword>
<keyword id="KW-0418">Kinase</keyword>
<keyword id="KW-0460">Magnesium</keyword>
<keyword id="KW-0479">Metal-binding</keyword>
<keyword id="KW-0547">Nucleotide-binding</keyword>
<keyword id="KW-1185">Reference proteome</keyword>
<keyword id="KW-0808">Transferase</keyword>
<evidence type="ECO:0000255" key="1">
    <source>
        <dbReference type="HAMAP-Rule" id="MF_01881"/>
    </source>
</evidence>
<comment type="function">
    <text evidence="1">Catalyzes the conversion of propionyl phosphate and ADP to propionate and ATP.</text>
</comment>
<comment type="catalytic activity">
    <reaction evidence="1">
        <text>propanoate + ATP = propanoyl phosphate + ADP</text>
        <dbReference type="Rhea" id="RHEA:23148"/>
        <dbReference type="ChEBI" id="CHEBI:17272"/>
        <dbReference type="ChEBI" id="CHEBI:30616"/>
        <dbReference type="ChEBI" id="CHEBI:58933"/>
        <dbReference type="ChEBI" id="CHEBI:456216"/>
        <dbReference type="EC" id="2.7.2.15"/>
    </reaction>
</comment>
<comment type="cofactor">
    <cofactor evidence="1">
        <name>Mg(2+)</name>
        <dbReference type="ChEBI" id="CHEBI:18420"/>
    </cofactor>
</comment>
<comment type="pathway">
    <text evidence="1">Amino-acid degradation; L-threonine degradation via propanoate pathway; propanoate from L-threonine: step 4/4.</text>
</comment>
<comment type="subunit">
    <text evidence="1">Homodimer.</text>
</comment>
<comment type="similarity">
    <text evidence="1">Belongs to the acetokinase family. TdcD subfamily.</text>
</comment>
<reference key="1">
    <citation type="journal article" date="2009" name="PLoS ONE">
        <title>Genome sequence of the versatile fish pathogen Edwardsiella tarda provides insights into its adaptation to broad host ranges and intracellular niches.</title>
        <authorList>
            <person name="Wang Q."/>
            <person name="Yang M."/>
            <person name="Xiao J."/>
            <person name="Wu H."/>
            <person name="Wang X."/>
            <person name="Lv Y."/>
            <person name="Xu L."/>
            <person name="Zheng H."/>
            <person name="Wang S."/>
            <person name="Zhao G."/>
            <person name="Liu Q."/>
            <person name="Zhang Y."/>
        </authorList>
    </citation>
    <scope>NUCLEOTIDE SEQUENCE [LARGE SCALE GENOMIC DNA]</scope>
    <source>
        <strain>EIB202 / CCTCC M208068</strain>
    </source>
</reference>
<sequence length="402" mass="43094">MHEYPVVLVINSGSSSIKFSVLDAQRCEVLLAGIAEGINSGSATLSVNGAAPVALAQRGYEPALAAICAELEKRSLIDSVALIGHRVAHGGNLFQQSAIVDDEVMEKIRRISPLAPLHNYANLSGMVSARHLFPGVTQVAVFDTSFHQTLAPEAWLYALPYRYAQEYGVRRYGFHGTSHRYVSQRAHHLLGLSEADSGLVIAHLGNGASICAVRNGRSVDTSMGMTPLEGLMMGTRSGDVDFGALAWIASQTGQSIADLEQMVNTESGLLGISGLSSDLRVLERAQREGHQRADLAIRTFVHRIARHIGGHAASLRRLDGIIFTGGIGENSALIRRMVLEHLSVFGITLAPDKNNMPGSAGERIISGEDSAVICAVIPTDEERMIALDALRLGKIMPSIEYA</sequence>
<dbReference type="EC" id="2.7.2.15" evidence="1"/>
<dbReference type="EMBL" id="CP001135">
    <property type="protein sequence ID" value="ACY83741.1"/>
    <property type="molecule type" value="Genomic_DNA"/>
</dbReference>
<dbReference type="RefSeq" id="WP_012847761.1">
    <property type="nucleotide sequence ID" value="NZ_JBCHVA010000003.1"/>
</dbReference>
<dbReference type="SMR" id="D0ZE10"/>
<dbReference type="GeneID" id="72527780"/>
<dbReference type="KEGG" id="etr:ETAE_0896"/>
<dbReference type="HOGENOM" id="CLU_020352_0_1_6"/>
<dbReference type="OrthoDB" id="9802453at2"/>
<dbReference type="UniPathway" id="UPA00052">
    <property type="reaction ID" value="UER00510"/>
</dbReference>
<dbReference type="Proteomes" id="UP000002634">
    <property type="component" value="Chromosome"/>
</dbReference>
<dbReference type="GO" id="GO:0005829">
    <property type="term" value="C:cytosol"/>
    <property type="evidence" value="ECO:0007669"/>
    <property type="project" value="TreeGrafter"/>
</dbReference>
<dbReference type="GO" id="GO:0008776">
    <property type="term" value="F:acetate kinase activity"/>
    <property type="evidence" value="ECO:0007669"/>
    <property type="project" value="TreeGrafter"/>
</dbReference>
<dbReference type="GO" id="GO:0005524">
    <property type="term" value="F:ATP binding"/>
    <property type="evidence" value="ECO:0007669"/>
    <property type="project" value="UniProtKB-KW"/>
</dbReference>
<dbReference type="GO" id="GO:0046872">
    <property type="term" value="F:metal ion binding"/>
    <property type="evidence" value="ECO:0007669"/>
    <property type="project" value="UniProtKB-KW"/>
</dbReference>
<dbReference type="GO" id="GO:0008980">
    <property type="term" value="F:propionate kinase activity"/>
    <property type="evidence" value="ECO:0007669"/>
    <property type="project" value="UniProtKB-UniRule"/>
</dbReference>
<dbReference type="GO" id="GO:0006083">
    <property type="term" value="P:acetate metabolic process"/>
    <property type="evidence" value="ECO:0007669"/>
    <property type="project" value="TreeGrafter"/>
</dbReference>
<dbReference type="GO" id="GO:0070689">
    <property type="term" value="P:L-threonine catabolic process to propionate"/>
    <property type="evidence" value="ECO:0007669"/>
    <property type="project" value="UniProtKB-UniRule"/>
</dbReference>
<dbReference type="CDD" id="cd24010">
    <property type="entry name" value="ASKHA_NBD_AcK_PK"/>
    <property type="match status" value="1"/>
</dbReference>
<dbReference type="Gene3D" id="3.30.420.40">
    <property type="match status" value="2"/>
</dbReference>
<dbReference type="HAMAP" id="MF_00020">
    <property type="entry name" value="Acetate_kinase"/>
    <property type="match status" value="1"/>
</dbReference>
<dbReference type="HAMAP" id="MF_01881">
    <property type="entry name" value="Propion_kin_subfam1"/>
    <property type="match status" value="1"/>
</dbReference>
<dbReference type="InterPro" id="IPR004372">
    <property type="entry name" value="Ac/propionate_kinase"/>
</dbReference>
<dbReference type="InterPro" id="IPR000890">
    <property type="entry name" value="Aliphatic_acid_kin_short-chain"/>
</dbReference>
<dbReference type="InterPro" id="IPR023865">
    <property type="entry name" value="Aliphatic_acid_kinase_CS"/>
</dbReference>
<dbReference type="InterPro" id="IPR043129">
    <property type="entry name" value="ATPase_NBD"/>
</dbReference>
<dbReference type="InterPro" id="IPR024917">
    <property type="entry name" value="Propionate_kinase"/>
</dbReference>
<dbReference type="NCBIfam" id="TIGR00016">
    <property type="entry name" value="ackA"/>
    <property type="match status" value="1"/>
</dbReference>
<dbReference type="NCBIfam" id="NF009045">
    <property type="entry name" value="PRK12379.1"/>
    <property type="match status" value="1"/>
</dbReference>
<dbReference type="PANTHER" id="PTHR21060">
    <property type="entry name" value="ACETATE KINASE"/>
    <property type="match status" value="1"/>
</dbReference>
<dbReference type="PANTHER" id="PTHR21060:SF17">
    <property type="entry name" value="PROPIONATE KINASE"/>
    <property type="match status" value="1"/>
</dbReference>
<dbReference type="Pfam" id="PF00871">
    <property type="entry name" value="Acetate_kinase"/>
    <property type="match status" value="1"/>
</dbReference>
<dbReference type="PIRSF" id="PIRSF000722">
    <property type="entry name" value="Acetate_prop_kin"/>
    <property type="match status" value="1"/>
</dbReference>
<dbReference type="PRINTS" id="PR00471">
    <property type="entry name" value="ACETATEKNASE"/>
</dbReference>
<dbReference type="SUPFAM" id="SSF53067">
    <property type="entry name" value="Actin-like ATPase domain"/>
    <property type="match status" value="2"/>
</dbReference>
<dbReference type="PROSITE" id="PS01075">
    <property type="entry name" value="ACETATE_KINASE_1"/>
    <property type="match status" value="1"/>
</dbReference>
<dbReference type="PROSITE" id="PS01076">
    <property type="entry name" value="ACETATE_KINASE_2"/>
    <property type="match status" value="1"/>
</dbReference>
<accession>D0ZE10</accession>
<protein>
    <recommendedName>
        <fullName evidence="1">Propionate kinase</fullName>
        <ecNumber evidence="1">2.7.2.15</ecNumber>
    </recommendedName>
</protein>
<feature type="chain" id="PRO_0000398205" description="Propionate kinase">
    <location>
        <begin position="1"/>
        <end position="402"/>
    </location>
</feature>
<feature type="active site" description="Proton donor/acceptor" evidence="1">
    <location>
        <position position="143"/>
    </location>
</feature>
<feature type="binding site" evidence="1">
    <location>
        <position position="11"/>
    </location>
    <ligand>
        <name>ATP</name>
        <dbReference type="ChEBI" id="CHEBI:30616"/>
    </ligand>
</feature>
<feature type="binding site" evidence="1">
    <location>
        <position position="11"/>
    </location>
    <ligand>
        <name>Mg(2+)</name>
        <dbReference type="ChEBI" id="CHEBI:18420"/>
    </ligand>
</feature>
<feature type="binding site" evidence="1">
    <location>
        <position position="18"/>
    </location>
    <ligand>
        <name>ATP</name>
        <dbReference type="ChEBI" id="CHEBI:30616"/>
    </ligand>
</feature>
<feature type="binding site" evidence="1">
    <location>
        <position position="86"/>
    </location>
    <ligand>
        <name>substrate</name>
    </ligand>
</feature>
<feature type="binding site" evidence="1">
    <location>
        <position position="175"/>
    </location>
    <ligand>
        <name>ATP</name>
        <dbReference type="ChEBI" id="CHEBI:30616"/>
    </ligand>
</feature>
<feature type="binding site" evidence="1">
    <location>
        <begin position="203"/>
        <end position="207"/>
    </location>
    <ligand>
        <name>ATP</name>
        <dbReference type="ChEBI" id="CHEBI:30616"/>
    </ligand>
</feature>
<feature type="binding site" evidence="1">
    <location>
        <begin position="278"/>
        <end position="280"/>
    </location>
    <ligand>
        <name>ATP</name>
        <dbReference type="ChEBI" id="CHEBI:30616"/>
    </ligand>
</feature>
<feature type="binding site" evidence="1">
    <location>
        <begin position="326"/>
        <end position="330"/>
    </location>
    <ligand>
        <name>ATP</name>
        <dbReference type="ChEBI" id="CHEBI:30616"/>
    </ligand>
</feature>
<feature type="site" description="Transition state stabilizer" evidence="1">
    <location>
        <position position="175"/>
    </location>
</feature>
<feature type="site" description="Transition state stabilizer" evidence="1">
    <location>
        <position position="236"/>
    </location>
</feature>
<gene>
    <name evidence="1" type="primary">tdcD</name>
    <name type="ordered locus">ETAE_0896</name>
</gene>